<gene>
    <name evidence="1" type="primary">obg</name>
    <name type="ordered locus">RHECIAT_CH0004356</name>
</gene>
<evidence type="ECO:0000255" key="1">
    <source>
        <dbReference type="HAMAP-Rule" id="MF_01454"/>
    </source>
</evidence>
<evidence type="ECO:0000255" key="2">
    <source>
        <dbReference type="PROSITE-ProRule" id="PRU01231"/>
    </source>
</evidence>
<evidence type="ECO:0000256" key="3">
    <source>
        <dbReference type="SAM" id="MobiDB-lite"/>
    </source>
</evidence>
<sequence>MKFLDEAKVYIRSGDGGAGSVSFRREKFIEFGGPDGGDGGRGGDVWVETVNGLNTLIDFRYQQHFKATIGTHGMGRNRTGANGSDVTLKVPVGTQIFEEDRETLICDLTVEGQRYCLAHGGNGGFGNAHFKTSTNQAPDWANPGLPGEEKTIWLRLKLIADAGLVGLPNAGKSTFLASVTRARPKIANYPFTTLHPNLGVATIDEREFILADIPGLIEGAHEGVGIGDRFLGHVERTRVLLHLVSAQEEKVGKAYKTVKHELEAYGNDLTDKPEIVALSQIDVLDEAELKKKTKELAKACGKTPFQISAVTGRGMTEVLRALRDVIVEENAEEKPAKVPKLRHRDMIVSDEGEGEDGADDQP</sequence>
<feature type="chain" id="PRO_0000386176" description="GTPase Obg">
    <location>
        <begin position="1"/>
        <end position="362"/>
    </location>
</feature>
<feature type="domain" description="Obg" evidence="2">
    <location>
        <begin position="1"/>
        <end position="159"/>
    </location>
</feature>
<feature type="domain" description="OBG-type G" evidence="1">
    <location>
        <begin position="160"/>
        <end position="327"/>
    </location>
</feature>
<feature type="region of interest" description="Disordered" evidence="3">
    <location>
        <begin position="332"/>
        <end position="362"/>
    </location>
</feature>
<feature type="compositionally biased region" description="Acidic residues" evidence="3">
    <location>
        <begin position="348"/>
        <end position="362"/>
    </location>
</feature>
<feature type="binding site" evidence="1">
    <location>
        <begin position="166"/>
        <end position="173"/>
    </location>
    <ligand>
        <name>GTP</name>
        <dbReference type="ChEBI" id="CHEBI:37565"/>
    </ligand>
</feature>
<feature type="binding site" evidence="1">
    <location>
        <position position="173"/>
    </location>
    <ligand>
        <name>Mg(2+)</name>
        <dbReference type="ChEBI" id="CHEBI:18420"/>
    </ligand>
</feature>
<feature type="binding site" evidence="1">
    <location>
        <begin position="191"/>
        <end position="195"/>
    </location>
    <ligand>
        <name>GTP</name>
        <dbReference type="ChEBI" id="CHEBI:37565"/>
    </ligand>
</feature>
<feature type="binding site" evidence="1">
    <location>
        <position position="193"/>
    </location>
    <ligand>
        <name>Mg(2+)</name>
        <dbReference type="ChEBI" id="CHEBI:18420"/>
    </ligand>
</feature>
<feature type="binding site" evidence="1">
    <location>
        <begin position="212"/>
        <end position="215"/>
    </location>
    <ligand>
        <name>GTP</name>
        <dbReference type="ChEBI" id="CHEBI:37565"/>
    </ligand>
</feature>
<feature type="binding site" evidence="1">
    <location>
        <begin position="279"/>
        <end position="282"/>
    </location>
    <ligand>
        <name>GTP</name>
        <dbReference type="ChEBI" id="CHEBI:37565"/>
    </ligand>
</feature>
<feature type="binding site" evidence="1">
    <location>
        <begin position="308"/>
        <end position="310"/>
    </location>
    <ligand>
        <name>GTP</name>
        <dbReference type="ChEBI" id="CHEBI:37565"/>
    </ligand>
</feature>
<accession>B3PRZ3</accession>
<comment type="function">
    <text evidence="1">An essential GTPase which binds GTP, GDP and possibly (p)ppGpp with moderate affinity, with high nucleotide exchange rates and a fairly low GTP hydrolysis rate. Plays a role in control of the cell cycle, stress response, ribosome biogenesis and in those bacteria that undergo differentiation, in morphogenesis control.</text>
</comment>
<comment type="cofactor">
    <cofactor evidence="1">
        <name>Mg(2+)</name>
        <dbReference type="ChEBI" id="CHEBI:18420"/>
    </cofactor>
</comment>
<comment type="subunit">
    <text evidence="1">Monomer.</text>
</comment>
<comment type="subcellular location">
    <subcellularLocation>
        <location evidence="1">Cytoplasm</location>
    </subcellularLocation>
</comment>
<comment type="similarity">
    <text evidence="1">Belongs to the TRAFAC class OBG-HflX-like GTPase superfamily. OBG GTPase family.</text>
</comment>
<keyword id="KW-0963">Cytoplasm</keyword>
<keyword id="KW-0342">GTP-binding</keyword>
<keyword id="KW-0378">Hydrolase</keyword>
<keyword id="KW-0460">Magnesium</keyword>
<keyword id="KW-0479">Metal-binding</keyword>
<keyword id="KW-0547">Nucleotide-binding</keyword>
<protein>
    <recommendedName>
        <fullName evidence="1">GTPase Obg</fullName>
        <ecNumber evidence="1">3.6.5.-</ecNumber>
    </recommendedName>
    <alternativeName>
        <fullName evidence="1">GTP-binding protein Obg</fullName>
    </alternativeName>
</protein>
<name>OBG_RHIE6</name>
<organism>
    <name type="scientific">Rhizobium etli (strain CIAT 652)</name>
    <dbReference type="NCBI Taxonomy" id="491916"/>
    <lineage>
        <taxon>Bacteria</taxon>
        <taxon>Pseudomonadati</taxon>
        <taxon>Pseudomonadota</taxon>
        <taxon>Alphaproteobacteria</taxon>
        <taxon>Hyphomicrobiales</taxon>
        <taxon>Rhizobiaceae</taxon>
        <taxon>Rhizobium/Agrobacterium group</taxon>
        <taxon>Rhizobium</taxon>
    </lineage>
</organism>
<proteinExistence type="inferred from homology"/>
<reference key="1">
    <citation type="journal article" date="2010" name="Appl. Environ. Microbiol.">
        <title>Conserved symbiotic plasmid DNA sequences in the multireplicon pangenomic structure of Rhizobium etli.</title>
        <authorList>
            <person name="Gonzalez V."/>
            <person name="Acosta J.L."/>
            <person name="Santamaria R.I."/>
            <person name="Bustos P."/>
            <person name="Fernandez J.L."/>
            <person name="Hernandez Gonzalez I.L."/>
            <person name="Diaz R."/>
            <person name="Flores M."/>
            <person name="Palacios R."/>
            <person name="Mora J."/>
            <person name="Davila G."/>
        </authorList>
    </citation>
    <scope>NUCLEOTIDE SEQUENCE [LARGE SCALE GENOMIC DNA]</scope>
    <source>
        <strain>CIAT 652</strain>
    </source>
</reference>
<dbReference type="EC" id="3.6.5.-" evidence="1"/>
<dbReference type="EMBL" id="CP001074">
    <property type="protein sequence ID" value="ACE93283.1"/>
    <property type="molecule type" value="Genomic_DNA"/>
</dbReference>
<dbReference type="SMR" id="B3PRZ3"/>
<dbReference type="KEGG" id="rec:RHECIAT_CH0004356"/>
<dbReference type="eggNOG" id="COG0536">
    <property type="taxonomic scope" value="Bacteria"/>
</dbReference>
<dbReference type="HOGENOM" id="CLU_011747_2_0_5"/>
<dbReference type="Proteomes" id="UP000008817">
    <property type="component" value="Chromosome"/>
</dbReference>
<dbReference type="GO" id="GO:0005737">
    <property type="term" value="C:cytoplasm"/>
    <property type="evidence" value="ECO:0007669"/>
    <property type="project" value="UniProtKB-SubCell"/>
</dbReference>
<dbReference type="GO" id="GO:0005525">
    <property type="term" value="F:GTP binding"/>
    <property type="evidence" value="ECO:0007669"/>
    <property type="project" value="UniProtKB-UniRule"/>
</dbReference>
<dbReference type="GO" id="GO:0003924">
    <property type="term" value="F:GTPase activity"/>
    <property type="evidence" value="ECO:0007669"/>
    <property type="project" value="UniProtKB-UniRule"/>
</dbReference>
<dbReference type="GO" id="GO:0000287">
    <property type="term" value="F:magnesium ion binding"/>
    <property type="evidence" value="ECO:0007669"/>
    <property type="project" value="InterPro"/>
</dbReference>
<dbReference type="GO" id="GO:0042254">
    <property type="term" value="P:ribosome biogenesis"/>
    <property type="evidence" value="ECO:0007669"/>
    <property type="project" value="UniProtKB-UniRule"/>
</dbReference>
<dbReference type="CDD" id="cd01898">
    <property type="entry name" value="Obg"/>
    <property type="match status" value="1"/>
</dbReference>
<dbReference type="FunFam" id="2.70.210.12:FF:000001">
    <property type="entry name" value="GTPase Obg"/>
    <property type="match status" value="1"/>
</dbReference>
<dbReference type="Gene3D" id="2.70.210.12">
    <property type="entry name" value="GTP1/OBG domain"/>
    <property type="match status" value="1"/>
</dbReference>
<dbReference type="Gene3D" id="3.40.50.300">
    <property type="entry name" value="P-loop containing nucleotide triphosphate hydrolases"/>
    <property type="match status" value="1"/>
</dbReference>
<dbReference type="HAMAP" id="MF_01454">
    <property type="entry name" value="GTPase_Obg"/>
    <property type="match status" value="1"/>
</dbReference>
<dbReference type="InterPro" id="IPR031167">
    <property type="entry name" value="G_OBG"/>
</dbReference>
<dbReference type="InterPro" id="IPR006073">
    <property type="entry name" value="GTP-bd"/>
</dbReference>
<dbReference type="InterPro" id="IPR014100">
    <property type="entry name" value="GTP-bd_Obg/CgtA"/>
</dbReference>
<dbReference type="InterPro" id="IPR006074">
    <property type="entry name" value="GTP1-OBG_CS"/>
</dbReference>
<dbReference type="InterPro" id="IPR006169">
    <property type="entry name" value="GTP1_OBG_dom"/>
</dbReference>
<dbReference type="InterPro" id="IPR036726">
    <property type="entry name" value="GTP1_OBG_dom_sf"/>
</dbReference>
<dbReference type="InterPro" id="IPR045086">
    <property type="entry name" value="OBG_GTPase"/>
</dbReference>
<dbReference type="InterPro" id="IPR027417">
    <property type="entry name" value="P-loop_NTPase"/>
</dbReference>
<dbReference type="InterPro" id="IPR005225">
    <property type="entry name" value="Small_GTP-bd"/>
</dbReference>
<dbReference type="NCBIfam" id="TIGR02729">
    <property type="entry name" value="Obg_CgtA"/>
    <property type="match status" value="1"/>
</dbReference>
<dbReference type="NCBIfam" id="NF008955">
    <property type="entry name" value="PRK12297.1"/>
    <property type="match status" value="1"/>
</dbReference>
<dbReference type="NCBIfam" id="NF008956">
    <property type="entry name" value="PRK12299.1"/>
    <property type="match status" value="1"/>
</dbReference>
<dbReference type="NCBIfam" id="TIGR00231">
    <property type="entry name" value="small_GTP"/>
    <property type="match status" value="1"/>
</dbReference>
<dbReference type="PANTHER" id="PTHR11702">
    <property type="entry name" value="DEVELOPMENTALLY REGULATED GTP-BINDING PROTEIN-RELATED"/>
    <property type="match status" value="1"/>
</dbReference>
<dbReference type="PANTHER" id="PTHR11702:SF31">
    <property type="entry name" value="MITOCHONDRIAL RIBOSOME-ASSOCIATED GTPASE 2"/>
    <property type="match status" value="1"/>
</dbReference>
<dbReference type="Pfam" id="PF01018">
    <property type="entry name" value="GTP1_OBG"/>
    <property type="match status" value="1"/>
</dbReference>
<dbReference type="Pfam" id="PF01926">
    <property type="entry name" value="MMR_HSR1"/>
    <property type="match status" value="1"/>
</dbReference>
<dbReference type="PIRSF" id="PIRSF002401">
    <property type="entry name" value="GTP_bd_Obg/CgtA"/>
    <property type="match status" value="1"/>
</dbReference>
<dbReference type="PRINTS" id="PR00326">
    <property type="entry name" value="GTP1OBG"/>
</dbReference>
<dbReference type="SUPFAM" id="SSF82051">
    <property type="entry name" value="Obg GTP-binding protein N-terminal domain"/>
    <property type="match status" value="1"/>
</dbReference>
<dbReference type="SUPFAM" id="SSF52540">
    <property type="entry name" value="P-loop containing nucleoside triphosphate hydrolases"/>
    <property type="match status" value="1"/>
</dbReference>
<dbReference type="PROSITE" id="PS51710">
    <property type="entry name" value="G_OBG"/>
    <property type="match status" value="1"/>
</dbReference>
<dbReference type="PROSITE" id="PS00905">
    <property type="entry name" value="GTP1_OBG"/>
    <property type="match status" value="1"/>
</dbReference>
<dbReference type="PROSITE" id="PS51883">
    <property type="entry name" value="OBG"/>
    <property type="match status" value="1"/>
</dbReference>